<feature type="chain" id="PRO_0000371160" description="ATP synthase subunit delta">
    <location>
        <begin position="1"/>
        <end position="178"/>
    </location>
</feature>
<keyword id="KW-0066">ATP synthesis</keyword>
<keyword id="KW-1003">Cell membrane</keyword>
<keyword id="KW-0139">CF(1)</keyword>
<keyword id="KW-0375">Hydrogen ion transport</keyword>
<keyword id="KW-0406">Ion transport</keyword>
<keyword id="KW-0472">Membrane</keyword>
<keyword id="KW-0813">Transport</keyword>
<gene>
    <name evidence="1" type="primary">atpH</name>
    <name type="ordered locus">spyM18_0815</name>
</gene>
<evidence type="ECO:0000255" key="1">
    <source>
        <dbReference type="HAMAP-Rule" id="MF_01416"/>
    </source>
</evidence>
<name>ATPD_STRP8</name>
<protein>
    <recommendedName>
        <fullName evidence="1">ATP synthase subunit delta</fullName>
    </recommendedName>
    <alternativeName>
        <fullName evidence="1">ATP synthase F(1) sector subunit delta</fullName>
    </alternativeName>
    <alternativeName>
        <fullName evidence="1">F-type ATPase subunit delta</fullName>
        <shortName evidence="1">F-ATPase subunit delta</shortName>
    </alternativeName>
</protein>
<dbReference type="EMBL" id="AE009949">
    <property type="protein sequence ID" value="AAL97479.1"/>
    <property type="molecule type" value="Genomic_DNA"/>
</dbReference>
<dbReference type="RefSeq" id="WP_002985240.1">
    <property type="nucleotide sequence ID" value="NC_003485.1"/>
</dbReference>
<dbReference type="SMR" id="Q8P1K7"/>
<dbReference type="KEGG" id="spm:spyM18_0815"/>
<dbReference type="HOGENOM" id="CLU_085114_1_2_9"/>
<dbReference type="GO" id="GO:0005886">
    <property type="term" value="C:plasma membrane"/>
    <property type="evidence" value="ECO:0007669"/>
    <property type="project" value="UniProtKB-SubCell"/>
</dbReference>
<dbReference type="GO" id="GO:0045259">
    <property type="term" value="C:proton-transporting ATP synthase complex"/>
    <property type="evidence" value="ECO:0007669"/>
    <property type="project" value="UniProtKB-KW"/>
</dbReference>
<dbReference type="GO" id="GO:0046933">
    <property type="term" value="F:proton-transporting ATP synthase activity, rotational mechanism"/>
    <property type="evidence" value="ECO:0007669"/>
    <property type="project" value="UniProtKB-UniRule"/>
</dbReference>
<dbReference type="Gene3D" id="1.10.520.20">
    <property type="entry name" value="N-terminal domain of the delta subunit of the F1F0-ATP synthase"/>
    <property type="match status" value="1"/>
</dbReference>
<dbReference type="HAMAP" id="MF_01416">
    <property type="entry name" value="ATP_synth_delta_bact"/>
    <property type="match status" value="1"/>
</dbReference>
<dbReference type="InterPro" id="IPR026015">
    <property type="entry name" value="ATP_synth_OSCP/delta_N_sf"/>
</dbReference>
<dbReference type="InterPro" id="IPR000711">
    <property type="entry name" value="ATPase_OSCP/dsu"/>
</dbReference>
<dbReference type="NCBIfam" id="TIGR01145">
    <property type="entry name" value="ATP_synt_delta"/>
    <property type="match status" value="1"/>
</dbReference>
<dbReference type="NCBIfam" id="NF004401">
    <property type="entry name" value="PRK05758.2-1"/>
    <property type="match status" value="1"/>
</dbReference>
<dbReference type="PANTHER" id="PTHR11910">
    <property type="entry name" value="ATP SYNTHASE DELTA CHAIN"/>
    <property type="match status" value="1"/>
</dbReference>
<dbReference type="Pfam" id="PF00213">
    <property type="entry name" value="OSCP"/>
    <property type="match status" value="1"/>
</dbReference>
<dbReference type="PRINTS" id="PR00125">
    <property type="entry name" value="ATPASEDELTA"/>
</dbReference>
<dbReference type="SUPFAM" id="SSF47928">
    <property type="entry name" value="N-terminal domain of the delta subunit of the F1F0-ATP synthase"/>
    <property type="match status" value="1"/>
</dbReference>
<sequence>MTKKEQALIEQYAKSLVEVASEHHSLDALQADVLAILETFVTTNLDQSLSSLAVPHAEKIKLLTLLKGNNSVYMNNFLNLILQNEREAYLYQMLQTVLNEIAIVSNQYDVTVTSSLPLTEEQKSRVRAVVAKKFAVTAGRLIEKVDPSLIGGFIISVNNKVIDTSIRRQLQAFKMNLK</sequence>
<accession>Q8P1K7</accession>
<organism>
    <name type="scientific">Streptococcus pyogenes serotype M18 (strain MGAS8232)</name>
    <dbReference type="NCBI Taxonomy" id="186103"/>
    <lineage>
        <taxon>Bacteria</taxon>
        <taxon>Bacillati</taxon>
        <taxon>Bacillota</taxon>
        <taxon>Bacilli</taxon>
        <taxon>Lactobacillales</taxon>
        <taxon>Streptococcaceae</taxon>
        <taxon>Streptococcus</taxon>
    </lineage>
</organism>
<comment type="function">
    <text evidence="1">F(1)F(0) ATP synthase produces ATP from ADP in the presence of a proton or sodium gradient. F-type ATPases consist of two structural domains, F(1) containing the extramembraneous catalytic core and F(0) containing the membrane proton channel, linked together by a central stalk and a peripheral stalk. During catalysis, ATP synthesis in the catalytic domain of F(1) is coupled via a rotary mechanism of the central stalk subunits to proton translocation.</text>
</comment>
<comment type="function">
    <text evidence="1">This protein is part of the stalk that links CF(0) to CF(1). It either transmits conformational changes from CF(0) to CF(1) or is implicated in proton conduction.</text>
</comment>
<comment type="subunit">
    <text evidence="1">F-type ATPases have 2 components, F(1) - the catalytic core - and F(0) - the membrane proton channel. F(1) has five subunits: alpha(3), beta(3), gamma(1), delta(1), epsilon(1). F(0) has three main subunits: a(1), b(2) and c(10-14). The alpha and beta chains form an alternating ring which encloses part of the gamma chain. F(1) is attached to F(0) by a central stalk formed by the gamma and epsilon chains, while a peripheral stalk is formed by the delta and b chains.</text>
</comment>
<comment type="subcellular location">
    <subcellularLocation>
        <location evidence="1">Cell membrane</location>
        <topology evidence="1">Peripheral membrane protein</topology>
    </subcellularLocation>
</comment>
<comment type="similarity">
    <text evidence="1">Belongs to the ATPase delta chain family.</text>
</comment>
<proteinExistence type="inferred from homology"/>
<reference key="1">
    <citation type="journal article" date="2002" name="Proc. Natl. Acad. Sci. U.S.A.">
        <title>Genome sequence and comparative microarray analysis of serotype M18 group A Streptococcus strains associated with acute rheumatic fever outbreaks.</title>
        <authorList>
            <person name="Smoot J.C."/>
            <person name="Barbian K.D."/>
            <person name="Van Gompel J.J."/>
            <person name="Smoot L.M."/>
            <person name="Chaussee M.S."/>
            <person name="Sylva G.L."/>
            <person name="Sturdevant D.E."/>
            <person name="Ricklefs S.M."/>
            <person name="Porcella S.F."/>
            <person name="Parkins L.D."/>
            <person name="Beres S.B."/>
            <person name="Campbell D.S."/>
            <person name="Smith T.M."/>
            <person name="Zhang Q."/>
            <person name="Kapur V."/>
            <person name="Daly J.A."/>
            <person name="Veasy L.G."/>
            <person name="Musser J.M."/>
        </authorList>
    </citation>
    <scope>NUCLEOTIDE SEQUENCE [LARGE SCALE GENOMIC DNA]</scope>
    <source>
        <strain>MGAS8232</strain>
    </source>
</reference>